<protein>
    <recommendedName>
        <fullName>DASH complex subunit SPC19</fullName>
    </recommendedName>
    <alternativeName>
        <fullName>19 kDa spindle pole component protein</fullName>
    </alternativeName>
    <alternativeName>
        <fullName>Outer kinetochore protein SPC19</fullName>
    </alternativeName>
</protein>
<sequence>MTDALEQSVLALEGTVSVLKDSVESLKCANEPSTNLASTMLQTKRVFRLVPEYDVERSKLDLIEEVEPLVRTLGDKLRKSMGRMQRELDTLQQTYELNDLRLKKNISMDDDDALNSPDMGQEYEGRDADDVVMMASSTNEELEELKKLKEKKKQLENKLEILKQK</sequence>
<name>SPC19_YEAST</name>
<keyword id="KW-0002">3D-structure</keyword>
<keyword id="KW-0131">Cell cycle</keyword>
<keyword id="KW-0132">Cell division</keyword>
<keyword id="KW-0137">Centromere</keyword>
<keyword id="KW-0158">Chromosome</keyword>
<keyword id="KW-0159">Chromosome partition</keyword>
<keyword id="KW-0175">Coiled coil</keyword>
<keyword id="KW-0963">Cytoplasm</keyword>
<keyword id="KW-0206">Cytoskeleton</keyword>
<keyword id="KW-0995">Kinetochore</keyword>
<keyword id="KW-0493">Microtubule</keyword>
<keyword id="KW-0498">Mitosis</keyword>
<keyword id="KW-0539">Nucleus</keyword>
<keyword id="KW-0597">Phosphoprotein</keyword>
<keyword id="KW-1185">Reference proteome</keyword>
<proteinExistence type="evidence at protein level"/>
<accession>Q03954</accession>
<accession>D6VSI3</accession>
<organism>
    <name type="scientific">Saccharomyces cerevisiae (strain ATCC 204508 / S288c)</name>
    <name type="common">Baker's yeast</name>
    <dbReference type="NCBI Taxonomy" id="559292"/>
    <lineage>
        <taxon>Eukaryota</taxon>
        <taxon>Fungi</taxon>
        <taxon>Dikarya</taxon>
        <taxon>Ascomycota</taxon>
        <taxon>Saccharomycotina</taxon>
        <taxon>Saccharomycetes</taxon>
        <taxon>Saccharomycetales</taxon>
        <taxon>Saccharomycetaceae</taxon>
        <taxon>Saccharomyces</taxon>
    </lineage>
</organism>
<evidence type="ECO:0000250" key="1">
    <source>
        <dbReference type="UniProtKB" id="Q50HP3"/>
    </source>
</evidence>
<evidence type="ECO:0000255" key="2"/>
<evidence type="ECO:0000269" key="3">
    <source>
    </source>
</evidence>
<evidence type="ECO:0000269" key="4">
    <source>
    </source>
</evidence>
<evidence type="ECO:0000269" key="5">
    <source>
    </source>
</evidence>
<evidence type="ECO:0000269" key="6">
    <source>
    </source>
</evidence>
<evidence type="ECO:0000269" key="7">
    <source>
    </source>
</evidence>
<evidence type="ECO:0000269" key="8">
    <source>
    </source>
</evidence>
<evidence type="ECO:0000269" key="9">
    <source>
    </source>
</evidence>
<evidence type="ECO:0000269" key="10">
    <source>
    </source>
</evidence>
<evidence type="ECO:0000269" key="11">
    <source>
    </source>
</evidence>
<evidence type="ECO:0000269" key="12">
    <source>
    </source>
</evidence>
<evidence type="ECO:0000269" key="13">
    <source>
    </source>
</evidence>
<evidence type="ECO:0000269" key="14">
    <source>
    </source>
</evidence>
<evidence type="ECO:0000269" key="15">
    <source>
    </source>
</evidence>
<evidence type="ECO:0000269" key="16">
    <source>
    </source>
</evidence>
<evidence type="ECO:0000269" key="17">
    <source>
    </source>
</evidence>
<evidence type="ECO:0000305" key="18"/>
<evidence type="ECO:0007744" key="19">
    <source>
    </source>
</evidence>
<evidence type="ECO:0007744" key="20">
    <source>
    </source>
</evidence>
<comment type="function">
    <text evidence="3 5 8 9 10 12 13 14 15 16 17">Component of the DASH complex that connects microtubules with kinetochores and couples microtubule depolymerisation to chromosome movement; it is involved in retrieving kinetochores to the spindle poles before their re-orientation on the spindle in early mitosis and allows microtubule depolymerization to pull chromosomes apart and resist detachment during anaphase (PubMed:15664196, PubMed:16415853, PubMed:16777964, PubMed:17460120, PubMed:17643123). Kinetochores, consisting of a centromere-associated inner segment and a microtubule-contacting outer segment, play a crucial role in chromosome segregation by mediating the physical connection between centromeric DNA and microtubules (PubMed:11782438). Kinetochores also serve as an input point for the spindle assembly checkpoint, which delays anaphase until all chromosomes have bioriented on the mitotic spindle (PubMed:11782438, PubMed:12408861). During spindle-kinetochore attachment, kinetochores first attach to the lateral surface of spindle microtubules, which supports the congression of chromosomes toward the middle of the dividing cell; they then slide along towards the spindle pole, a process independent of the DASH complex but requiring the NDC80 complex (PubMed:25236177). When the end of a disassembling microtubule reaches the laterally attached kinetochore, the DASH complex together with the NDC80 complex and STU2 convert lateral attachment to end-on capture to produce a structure that can track with microtubule shortening and sustain attachment when tension is applied across sister kinetochores upon their biorientation (PubMed:15640796, PubMed:15664196, PubMed:25236177). Microtubule depolymerization proceeds by protofilament splaying and induces the kinetochore-attached DASH complex to slide longitudinally, thereby helping to transduce depolymerization energy into pulling forces to disjoin chromatids (PubMed:16415853, PubMed:16777964). Incorrect microtubule attachments are corrected by releasing microubules from the kinetochore through phosphorylation by IPL1 of kinetochore components (PubMed:12408861). Links the microtubule cytoskeleton to chromosomes during interphase (PubMed:36701236). Also contributes to the poleward transport of kinetochores on microtubules following centromeric DNA replication in S-phase (PubMed:18079178).</text>
</comment>
<comment type="subunit">
    <text evidence="1 3 4 8 11 13 14 16">Component of the DASH complex consisting of ASK1, DAD1, DAD2, DAD3, DAD4, DAM1, DUO1, HSK3, SPC19 and SPC34, with a stoichiometry of one copy of each subunit per complex (PubMed:11782438, PubMed:11799062, PubMed:15640796, PubMed:16715078, PubMed:17460120, PubMed:17643123, PubMed:25236177). Multiple DASH complexes oligomerize to form a ring that encircles spindle microtubules and organizes the rod-like NDC80 complexes of the outer kinetochore (PubMed:16715078, PubMed:17460120, PubMed:17643123, PubMed:25236177). DASH complex oligomerization strengthens microtubule attachments (PubMed:25236177). On cytoplasmic microtubules, DASH complexes appear to form patches instead of rings (By similarity).</text>
</comment>
<comment type="interaction">
    <interactant intactId="EBI-38809">
        <id>Q03954</id>
    </interactant>
    <interactant intactId="EBI-26401">
        <id>P36131</id>
        <label>SPC34</label>
    </interactant>
    <organismsDiffer>false</organismsDiffer>
    <experiments>5</experiments>
</comment>
<comment type="subcellular location">
    <subcellularLocation>
        <location evidence="6">Nucleus</location>
    </subcellularLocation>
    <subcellularLocation>
        <location evidence="3 6">Cytoplasm</location>
        <location evidence="3 6">Cytoskeleton</location>
        <location evidence="3 6">Spindle</location>
    </subcellularLocation>
    <subcellularLocation>
        <location evidence="3 6">Chromosome</location>
        <location evidence="3 6">Centromere</location>
        <location evidence="3 6">Kinetochore</location>
    </subcellularLocation>
    <subcellularLocation>
        <location evidence="17">Chromosome</location>
    </subcellularLocation>
    <text evidence="6 17">Associates with the mitotic spindle and the kinetochore (PubMed:14562095). Associates with origin of replication (ORI) sites during interphase (PubMed:36701236).</text>
</comment>
<comment type="miscellaneous">
    <text evidence="7">Present with 639 molecules/cell in log phase SD medium.</text>
</comment>
<comment type="similarity">
    <text evidence="18">Belongs to the DASH complex SPC19 family.</text>
</comment>
<dbReference type="EMBL" id="Z48784">
    <property type="protein sequence ID" value="CAA88713.1"/>
    <property type="molecule type" value="Genomic_DNA"/>
</dbReference>
<dbReference type="EMBL" id="AY557667">
    <property type="protein sequence ID" value="AAS55993.1"/>
    <property type="molecule type" value="Genomic_DNA"/>
</dbReference>
<dbReference type="EMBL" id="BK006938">
    <property type="protein sequence ID" value="DAA12043.1"/>
    <property type="molecule type" value="Genomic_DNA"/>
</dbReference>
<dbReference type="PIR" id="S52707">
    <property type="entry name" value="S52707"/>
</dbReference>
<dbReference type="RefSeq" id="NP_010487.3">
    <property type="nucleotide sequence ID" value="NM_001180509.3"/>
</dbReference>
<dbReference type="PDB" id="8Q84">
    <property type="method" value="EM"/>
    <property type="resolution" value="3.15 A"/>
    <property type="chains" value="R/d=1-165"/>
</dbReference>
<dbReference type="PDB" id="8Q85">
    <property type="method" value="EM"/>
    <property type="resolution" value="3.97 A"/>
    <property type="chains" value="d=1-165"/>
</dbReference>
<dbReference type="PDBsum" id="8Q84"/>
<dbReference type="PDBsum" id="8Q85"/>
<dbReference type="EMDB" id="EMD-18246"/>
<dbReference type="EMDB" id="EMD-18247"/>
<dbReference type="SMR" id="Q03954"/>
<dbReference type="BioGRID" id="32252">
    <property type="interactions" value="231"/>
</dbReference>
<dbReference type="ComplexPortal" id="CPX-1041">
    <property type="entry name" value="DASH complex"/>
</dbReference>
<dbReference type="DIP" id="DIP-1579N"/>
<dbReference type="FunCoup" id="Q03954">
    <property type="interactions" value="66"/>
</dbReference>
<dbReference type="IntAct" id="Q03954">
    <property type="interactions" value="21"/>
</dbReference>
<dbReference type="MINT" id="Q03954"/>
<dbReference type="STRING" id="4932.YDR201W"/>
<dbReference type="iPTMnet" id="Q03954"/>
<dbReference type="PaxDb" id="4932-YDR201W"/>
<dbReference type="PeptideAtlas" id="Q03954"/>
<dbReference type="EnsemblFungi" id="YDR201W_mRNA">
    <property type="protein sequence ID" value="YDR201W"/>
    <property type="gene ID" value="YDR201W"/>
</dbReference>
<dbReference type="GeneID" id="851782"/>
<dbReference type="KEGG" id="sce:YDR201W"/>
<dbReference type="AGR" id="SGD:S000002609"/>
<dbReference type="SGD" id="S000002609">
    <property type="gene designation" value="SPC19"/>
</dbReference>
<dbReference type="VEuPathDB" id="FungiDB:YDR201W"/>
<dbReference type="eggNOG" id="ENOG502SDEQ">
    <property type="taxonomic scope" value="Eukaryota"/>
</dbReference>
<dbReference type="HOGENOM" id="CLU_1678217_0_0_1"/>
<dbReference type="InParanoid" id="Q03954"/>
<dbReference type="OMA" id="HKNGYDV"/>
<dbReference type="OrthoDB" id="3361333at2759"/>
<dbReference type="BioCyc" id="YEAST:G3O-29786-MONOMER"/>
<dbReference type="BioGRID-ORCS" id="851782">
    <property type="hits" value="4 hits in 10 CRISPR screens"/>
</dbReference>
<dbReference type="CD-CODE" id="876000F7">
    <property type="entry name" value="Centrosome"/>
</dbReference>
<dbReference type="PRO" id="PR:Q03954"/>
<dbReference type="Proteomes" id="UP000002311">
    <property type="component" value="Chromosome IV"/>
</dbReference>
<dbReference type="RNAct" id="Q03954">
    <property type="molecule type" value="protein"/>
</dbReference>
<dbReference type="GO" id="GO:0005737">
    <property type="term" value="C:cytoplasm"/>
    <property type="evidence" value="ECO:0007669"/>
    <property type="project" value="UniProtKB-KW"/>
</dbReference>
<dbReference type="GO" id="GO:0042729">
    <property type="term" value="C:DASH complex"/>
    <property type="evidence" value="ECO:0000314"/>
    <property type="project" value="SGD"/>
</dbReference>
<dbReference type="GO" id="GO:0072686">
    <property type="term" value="C:mitotic spindle"/>
    <property type="evidence" value="ECO:0000303"/>
    <property type="project" value="ComplexPortal"/>
</dbReference>
<dbReference type="GO" id="GO:0005876">
    <property type="term" value="C:spindle microtubule"/>
    <property type="evidence" value="ECO:0007669"/>
    <property type="project" value="InterPro"/>
</dbReference>
<dbReference type="GO" id="GO:0008608">
    <property type="term" value="P:attachment of spindle microtubules to kinetochore"/>
    <property type="evidence" value="ECO:0000314"/>
    <property type="project" value="SGD"/>
</dbReference>
<dbReference type="GO" id="GO:0051301">
    <property type="term" value="P:cell division"/>
    <property type="evidence" value="ECO:0007669"/>
    <property type="project" value="UniProtKB-KW"/>
</dbReference>
<dbReference type="GO" id="GO:1990758">
    <property type="term" value="P:mitotic sister chromatid biorientation"/>
    <property type="evidence" value="ECO:0000314"/>
    <property type="project" value="ComplexPortal"/>
</dbReference>
<dbReference type="GO" id="GO:0051987">
    <property type="term" value="P:positive regulation of attachment of spindle microtubules to kinetochore"/>
    <property type="evidence" value="ECO:0000314"/>
    <property type="project" value="ComplexPortal"/>
</dbReference>
<dbReference type="GO" id="GO:0031116">
    <property type="term" value="P:positive regulation of microtubule polymerization"/>
    <property type="evidence" value="ECO:0000314"/>
    <property type="project" value="SGD"/>
</dbReference>
<dbReference type="GO" id="GO:1990976">
    <property type="term" value="P:protein transport along microtubule to mitotic spindle pole body"/>
    <property type="evidence" value="ECO:0000315"/>
    <property type="project" value="UniProtKB"/>
</dbReference>
<dbReference type="InterPro" id="IPR013251">
    <property type="entry name" value="DASH_Spc19"/>
</dbReference>
<dbReference type="PANTHER" id="PTHR28262">
    <property type="entry name" value="DASH COMPLEX SUBUNIT SPC19"/>
    <property type="match status" value="1"/>
</dbReference>
<dbReference type="PANTHER" id="PTHR28262:SF1">
    <property type="entry name" value="DASH COMPLEX SUBUNIT SPC19"/>
    <property type="match status" value="1"/>
</dbReference>
<dbReference type="Pfam" id="PF08287">
    <property type="entry name" value="DASH_Spc19"/>
    <property type="match status" value="1"/>
</dbReference>
<gene>
    <name type="primary">SPC19</name>
    <name type="ordered locus">YDR201W</name>
</gene>
<feature type="chain" id="PRO_0000142593" description="DASH complex subunit SPC19">
    <location>
        <begin position="1"/>
        <end position="165"/>
    </location>
</feature>
<feature type="coiled-coil region" evidence="2">
    <location>
        <begin position="74"/>
        <end position="104"/>
    </location>
</feature>
<feature type="coiled-coil region" evidence="2">
    <location>
        <begin position="132"/>
        <end position="165"/>
    </location>
</feature>
<feature type="modified residue" description="Phosphoserine" evidence="5 20">
    <location>
        <position position="107"/>
    </location>
</feature>
<feature type="modified residue" description="Phosphoserine" evidence="5 19 20">
    <location>
        <position position="116"/>
    </location>
</feature>
<reference key="1">
    <citation type="journal article" date="1997" name="Nature">
        <title>The nucleotide sequence of Saccharomyces cerevisiae chromosome IV.</title>
        <authorList>
            <person name="Jacq C."/>
            <person name="Alt-Moerbe J."/>
            <person name="Andre B."/>
            <person name="Arnold W."/>
            <person name="Bahr A."/>
            <person name="Ballesta J.P.G."/>
            <person name="Bargues M."/>
            <person name="Baron L."/>
            <person name="Becker A."/>
            <person name="Biteau N."/>
            <person name="Bloecker H."/>
            <person name="Blugeon C."/>
            <person name="Boskovic J."/>
            <person name="Brandt P."/>
            <person name="Brueckner M."/>
            <person name="Buitrago M.J."/>
            <person name="Coster F."/>
            <person name="Delaveau T."/>
            <person name="del Rey F."/>
            <person name="Dujon B."/>
            <person name="Eide L.G."/>
            <person name="Garcia-Cantalejo J.M."/>
            <person name="Goffeau A."/>
            <person name="Gomez-Peris A."/>
            <person name="Granotier C."/>
            <person name="Hanemann V."/>
            <person name="Hankeln T."/>
            <person name="Hoheisel J.D."/>
            <person name="Jaeger W."/>
            <person name="Jimenez A."/>
            <person name="Jonniaux J.-L."/>
            <person name="Kraemer C."/>
            <person name="Kuester H."/>
            <person name="Laamanen P."/>
            <person name="Legros Y."/>
            <person name="Louis E.J."/>
            <person name="Moeller-Rieker S."/>
            <person name="Monnet A."/>
            <person name="Moro M."/>
            <person name="Mueller-Auer S."/>
            <person name="Nussbaumer B."/>
            <person name="Paricio N."/>
            <person name="Paulin L."/>
            <person name="Perea J."/>
            <person name="Perez-Alonso M."/>
            <person name="Perez-Ortin J.E."/>
            <person name="Pohl T.M."/>
            <person name="Prydz H."/>
            <person name="Purnelle B."/>
            <person name="Rasmussen S.W."/>
            <person name="Remacha M.A."/>
            <person name="Revuelta J.L."/>
            <person name="Rieger M."/>
            <person name="Salom D."/>
            <person name="Saluz H.P."/>
            <person name="Saiz J.E."/>
            <person name="Saren A.-M."/>
            <person name="Schaefer M."/>
            <person name="Scharfe M."/>
            <person name="Schmidt E.R."/>
            <person name="Schneider C."/>
            <person name="Scholler P."/>
            <person name="Schwarz S."/>
            <person name="Soler-Mira A."/>
            <person name="Urrestarazu L.A."/>
            <person name="Verhasselt P."/>
            <person name="Vissers S."/>
            <person name="Voet M."/>
            <person name="Volckaert G."/>
            <person name="Wagner G."/>
            <person name="Wambutt R."/>
            <person name="Wedler E."/>
            <person name="Wedler H."/>
            <person name="Woelfl S."/>
            <person name="Harris D.E."/>
            <person name="Bowman S."/>
            <person name="Brown D."/>
            <person name="Churcher C.M."/>
            <person name="Connor R."/>
            <person name="Dedman K."/>
            <person name="Gentles S."/>
            <person name="Hamlin N."/>
            <person name="Hunt S."/>
            <person name="Jones L."/>
            <person name="McDonald S."/>
            <person name="Murphy L.D."/>
            <person name="Niblett D."/>
            <person name="Odell C."/>
            <person name="Oliver K."/>
            <person name="Rajandream M.A."/>
            <person name="Richards C."/>
            <person name="Shore L."/>
            <person name="Walsh S.V."/>
            <person name="Barrell B.G."/>
            <person name="Dietrich F.S."/>
            <person name="Mulligan J.T."/>
            <person name="Allen E."/>
            <person name="Araujo R."/>
            <person name="Aviles E."/>
            <person name="Berno A."/>
            <person name="Carpenter J."/>
            <person name="Chen E."/>
            <person name="Cherry J.M."/>
            <person name="Chung E."/>
            <person name="Duncan M."/>
            <person name="Hunicke-Smith S."/>
            <person name="Hyman R.W."/>
            <person name="Komp C."/>
            <person name="Lashkari D."/>
            <person name="Lew H."/>
            <person name="Lin D."/>
            <person name="Mosedale D."/>
            <person name="Nakahara K."/>
            <person name="Namath A."/>
            <person name="Oefner P."/>
            <person name="Oh C."/>
            <person name="Petel F.X."/>
            <person name="Roberts D."/>
            <person name="Schramm S."/>
            <person name="Schroeder M."/>
            <person name="Shogren T."/>
            <person name="Shroff N."/>
            <person name="Winant A."/>
            <person name="Yelton M.A."/>
            <person name="Botstein D."/>
            <person name="Davis R.W."/>
            <person name="Johnston M."/>
            <person name="Andrews S."/>
            <person name="Brinkman R."/>
            <person name="Cooper J."/>
            <person name="Ding H."/>
            <person name="Du Z."/>
            <person name="Favello A."/>
            <person name="Fulton L."/>
            <person name="Gattung S."/>
            <person name="Greco T."/>
            <person name="Hallsworth K."/>
            <person name="Hawkins J."/>
            <person name="Hillier L.W."/>
            <person name="Jier M."/>
            <person name="Johnson D."/>
            <person name="Johnston L."/>
            <person name="Kirsten J."/>
            <person name="Kucaba T."/>
            <person name="Langston Y."/>
            <person name="Latreille P."/>
            <person name="Le T."/>
            <person name="Mardis E."/>
            <person name="Menezes S."/>
            <person name="Miller N."/>
            <person name="Nhan M."/>
            <person name="Pauley A."/>
            <person name="Peluso D."/>
            <person name="Rifkin L."/>
            <person name="Riles L."/>
            <person name="Taich A."/>
            <person name="Trevaskis E."/>
            <person name="Vignati D."/>
            <person name="Wilcox L."/>
            <person name="Wohldman P."/>
            <person name="Vaudin M."/>
            <person name="Wilson R."/>
            <person name="Waterston R."/>
            <person name="Albermann K."/>
            <person name="Hani J."/>
            <person name="Heumann K."/>
            <person name="Kleine K."/>
            <person name="Mewes H.-W."/>
            <person name="Zollner A."/>
            <person name="Zaccaria P."/>
        </authorList>
    </citation>
    <scope>NUCLEOTIDE SEQUENCE [LARGE SCALE GENOMIC DNA]</scope>
    <source>
        <strain>ATCC 204508 / S288c</strain>
    </source>
</reference>
<reference key="2">
    <citation type="journal article" date="2014" name="G3 (Bethesda)">
        <title>The reference genome sequence of Saccharomyces cerevisiae: Then and now.</title>
        <authorList>
            <person name="Engel S.R."/>
            <person name="Dietrich F.S."/>
            <person name="Fisk D.G."/>
            <person name="Binkley G."/>
            <person name="Balakrishnan R."/>
            <person name="Costanzo M.C."/>
            <person name="Dwight S.S."/>
            <person name="Hitz B.C."/>
            <person name="Karra K."/>
            <person name="Nash R.S."/>
            <person name="Weng S."/>
            <person name="Wong E.D."/>
            <person name="Lloyd P."/>
            <person name="Skrzypek M.S."/>
            <person name="Miyasato S.R."/>
            <person name="Simison M."/>
            <person name="Cherry J.M."/>
        </authorList>
    </citation>
    <scope>GENOME REANNOTATION</scope>
    <source>
        <strain>ATCC 204508 / S288c</strain>
    </source>
</reference>
<reference key="3">
    <citation type="journal article" date="2007" name="Genome Res.">
        <title>Approaching a complete repository of sequence-verified protein-encoding clones for Saccharomyces cerevisiae.</title>
        <authorList>
            <person name="Hu Y."/>
            <person name="Rolfs A."/>
            <person name="Bhullar B."/>
            <person name="Murthy T.V.S."/>
            <person name="Zhu C."/>
            <person name="Berger M.F."/>
            <person name="Camargo A.A."/>
            <person name="Kelley F."/>
            <person name="McCarron S."/>
            <person name="Jepson D."/>
            <person name="Richardson A."/>
            <person name="Raphael J."/>
            <person name="Moreira D."/>
            <person name="Taycher E."/>
            <person name="Zuo D."/>
            <person name="Mohr S."/>
            <person name="Kane M.F."/>
            <person name="Williamson J."/>
            <person name="Simpson A.J.G."/>
            <person name="Bulyk M.L."/>
            <person name="Harlow E."/>
            <person name="Marsischky G."/>
            <person name="Kolodner R.D."/>
            <person name="LaBaer J."/>
        </authorList>
    </citation>
    <scope>NUCLEOTIDE SEQUENCE [GENOMIC DNA]</scope>
    <source>
        <strain>ATCC 204508 / S288c</strain>
    </source>
</reference>
<reference key="4">
    <citation type="journal article" date="2002" name="Cell">
        <title>Phospho-regulation of kinetochore-microtubule attachments by the Aurora kinase Ipl1p.</title>
        <authorList>
            <person name="Cheeseman I.M."/>
            <person name="Anderson S."/>
            <person name="Jwa M."/>
            <person name="Green E.M."/>
            <person name="Kang J.-S."/>
            <person name="Yates J.R. III"/>
            <person name="Chan C.S.M."/>
            <person name="Drubin D.G."/>
            <person name="Barnes G."/>
        </authorList>
    </citation>
    <scope>FUNCTION</scope>
    <scope>PHOSPHORYLATION AT SER-107 AND SER-116</scope>
</reference>
<reference key="5">
    <citation type="journal article" date="2002" name="EMBO J.">
        <title>Four new subunits of the Dam1-Duo1 complex reveal novel functions in sister kinetochore biorientation.</title>
        <authorList>
            <person name="Janke C."/>
            <person name="Ortiz J."/>
            <person name="Tanaka T.U."/>
            <person name="Lechner J."/>
            <person name="Schiebel E."/>
        </authorList>
    </citation>
    <scope>FUNCTION</scope>
    <scope>IDENTIFICATION IN THE DASH COMPLEX</scope>
    <scope>IDENTIFICATION BY MASS SPECTROMETRY</scope>
    <scope>SUBCELLULAR LOCATION</scope>
</reference>
<reference key="6">
    <citation type="journal article" date="2002" name="Genes Dev.">
        <title>The mitotic spindle is required for loading of the DASH complex onto the kinetochore.</title>
        <authorList>
            <person name="Li Y."/>
            <person name="Bachant J.B."/>
            <person name="Alcasabas A.A."/>
            <person name="Wang Y."/>
            <person name="Qin J."/>
            <person name="Elledge S.J."/>
        </authorList>
    </citation>
    <scope>IDENTIFICATION IN THE DASH COMPLEX</scope>
</reference>
<reference key="7">
    <citation type="journal article" date="2003" name="Nature">
        <title>Global analysis of protein localization in budding yeast.</title>
        <authorList>
            <person name="Huh W.-K."/>
            <person name="Falvo J.V."/>
            <person name="Gerke L.C."/>
            <person name="Carroll A.S."/>
            <person name="Howson R.W."/>
            <person name="Weissman J.S."/>
            <person name="O'Shea E.K."/>
        </authorList>
    </citation>
    <scope>SUBCELLULAR LOCATION [LARGE SCALE ANALYSIS]</scope>
</reference>
<reference key="8">
    <citation type="journal article" date="2003" name="Nature">
        <title>Global analysis of protein expression in yeast.</title>
        <authorList>
            <person name="Ghaemmaghami S."/>
            <person name="Huh W.-K."/>
            <person name="Bower K."/>
            <person name="Howson R.W."/>
            <person name="Belle A."/>
            <person name="Dephoure N."/>
            <person name="O'Shea E.K."/>
            <person name="Weissman J.S."/>
        </authorList>
    </citation>
    <scope>LEVEL OF PROTEIN EXPRESSION [LARGE SCALE ANALYSIS]</scope>
</reference>
<reference key="9">
    <citation type="journal article" date="2005" name="Mol. Cell">
        <title>Formation of a dynamic kinetochore-microtubule interface through assembly of the Dam1 ring complex.</title>
        <authorList>
            <person name="Westermann S."/>
            <person name="Avila-Sakar A."/>
            <person name="Wang H.-W."/>
            <person name="Niederstrasser H."/>
            <person name="Wong J."/>
            <person name="Drubin D.G."/>
            <person name="Nogales E."/>
            <person name="Barnes G."/>
        </authorList>
    </citation>
    <scope>FUNCTION</scope>
</reference>
<reference key="10">
    <citation type="journal article" date="2006" name="Nature">
        <title>The Dam1 kinetochore ring complex moves processively on depolymerizing microtubule ends.</title>
        <authorList>
            <person name="Westermann S."/>
            <person name="Wang H.-W."/>
            <person name="Avila-Sakar A."/>
            <person name="Drubin D.G."/>
            <person name="Nogales E."/>
            <person name="Barnes G."/>
        </authorList>
    </citation>
    <scope>FUNCTION</scope>
</reference>
<reference key="11">
    <citation type="journal article" date="2006" name="Nat. Cell Biol.">
        <title>Molecular architecture of a kinetochore-microtubule attachment site.</title>
        <authorList>
            <person name="Joglekar A.P."/>
            <person name="Bouck D.C."/>
            <person name="Molk J.N."/>
            <person name="Bloom K.S."/>
            <person name="Salmon E.D."/>
        </authorList>
    </citation>
    <scope>IDENTIFICATION IN THE DASH COMPLEX</scope>
</reference>
<reference key="12">
    <citation type="journal article" date="2006" name="Proc. Natl. Acad. Sci. U.S.A.">
        <title>The Dam1 kinetochore complex harnesses microtubule dynamics to produce force and movement.</title>
        <authorList>
            <person name="Asbury C.L."/>
            <person name="Gestaut D.R."/>
            <person name="Powers A.F."/>
            <person name="Franck A.D."/>
            <person name="Davis T.N."/>
        </authorList>
    </citation>
    <scope>FUNCTION</scope>
</reference>
<reference key="13">
    <citation type="journal article" date="2007" name="Genes Dev.">
        <title>Kinetochore microtubule interaction during S phase in Saccharomyces cerevisiae.</title>
        <authorList>
            <person name="Kitamura E."/>
            <person name="Tanaka K."/>
            <person name="Kitamura Y."/>
            <person name="Tanaka T.U."/>
        </authorList>
    </citation>
    <scope>FUNCTION</scope>
</reference>
<reference key="14">
    <citation type="journal article" date="2007" name="Mol. Biol. Cell">
        <title>Protein arms in the kinetochore-microtubule interface of the yeast DASH complex.</title>
        <authorList>
            <person name="Miranda J.J."/>
            <person name="King D.S."/>
            <person name="Harrison S.C."/>
        </authorList>
    </citation>
    <scope>FUNCTION</scope>
    <scope>IDENTIFICATION IN THE DASH COMPLEX</scope>
</reference>
<reference key="15">
    <citation type="journal article" date="2008" name="Mol. Cell. Proteomics">
        <title>A multidimensional chromatography technology for in-depth phosphoproteome analysis.</title>
        <authorList>
            <person name="Albuquerque C.P."/>
            <person name="Smolka M.B."/>
            <person name="Payne S.H."/>
            <person name="Bafna V."/>
            <person name="Eng J."/>
            <person name="Zhou H."/>
        </authorList>
    </citation>
    <scope>PHOSPHORYLATION [LARGE SCALE ANALYSIS] AT SER-116</scope>
    <scope>IDENTIFICATION BY MASS SPECTROMETRY [LARGE SCALE ANALYSIS]</scope>
</reference>
<reference key="16">
    <citation type="journal article" date="2009" name="Science">
        <title>Global analysis of Cdk1 substrate phosphorylation sites provides insights into evolution.</title>
        <authorList>
            <person name="Holt L.J."/>
            <person name="Tuch B.B."/>
            <person name="Villen J."/>
            <person name="Johnson A.D."/>
            <person name="Gygi S.P."/>
            <person name="Morgan D.O."/>
        </authorList>
    </citation>
    <scope>PHOSPHORYLATION [LARGE SCALE ANALYSIS] AT SER-107 AND SER-116</scope>
    <scope>IDENTIFICATION BY MASS SPECTROMETRY [LARGE SCALE ANALYSIS]</scope>
</reference>
<reference key="17">
    <citation type="journal article" date="2014" name="Nat. Commun.">
        <title>Kinetochores require oligomerization of Dam1 complex to maintain microtubule attachments against tension and promote biorientation.</title>
        <authorList>
            <person name="Umbreit N.T."/>
            <person name="Miller M.P."/>
            <person name="Tien J.F."/>
            <person name="Ortola J.C."/>
            <person name="Gui L."/>
            <person name="Lee K.K."/>
            <person name="Biggins S."/>
            <person name="Asbury C.L."/>
            <person name="Davis T.N."/>
        </authorList>
    </citation>
    <scope>FUNCTION</scope>
    <scope>IDENTIFICATION IN THE DASH COMPLEX</scope>
    <scope>SUBUNIT</scope>
</reference>
<reference key="18">
    <citation type="journal article" date="2023" name="Cell Rep.">
        <title>Single-copy locus proteomics of early- and late-firing DNA replication origins identifies a role of Ask1/DASH complex in replication timing control.</title>
        <authorList>
            <person name="Weibeta M."/>
            <person name="Chanou A."/>
            <person name="Schauer T."/>
            <person name="Tvardovskiy A."/>
            <person name="Meiser S."/>
            <person name="Koenig A.C."/>
            <person name="Schmidt T."/>
            <person name="Kruse E."/>
            <person name="Ummethum H."/>
            <person name="Trauner M."/>
            <person name="Werner M."/>
            <person name="Lalonde M."/>
            <person name="Hauck S.M."/>
            <person name="Scialdone A."/>
            <person name="Hamperl S."/>
        </authorList>
    </citation>
    <scope>FUNCTION</scope>
    <scope>SUBCELLULAR LOCATION</scope>
</reference>
<reference key="19">
    <citation type="journal article" date="2005" name="Nat. Struct. Mol. Biol.">
        <title>The yeast DASH complex forms closed rings on microtubules.</title>
        <authorList>
            <person name="Miranda J.L."/>
            <person name="Wulf P.D."/>
            <person name="Sorger P.K."/>
            <person name="Harrison S.C."/>
        </authorList>
    </citation>
    <scope>ELECTRON MICROSCOPY OF DASH COMPLEX ALONE AND BOUND TO MICROTUBULES</scope>
    <scope>FUNCTION</scope>
    <scope>IDENTIFICATION IN THE DASH COMPLEX</scope>
</reference>
<reference key="20">
    <citation type="journal article" date="2007" name="Nat. Struct. Mol. Biol.">
        <title>Architecture of the Dam1 kinetochore ring complex and implications for microtubule-driven assembly and force-coupling mechanisms.</title>
        <authorList>
            <person name="Wang H.W."/>
            <person name="Ramey V.H."/>
            <person name="Westermann S."/>
            <person name="Leschziner A.E."/>
            <person name="Welburn J.P."/>
            <person name="Nakajima Y."/>
            <person name="Drubin D.G."/>
            <person name="Barnes G."/>
            <person name="Nogales E."/>
        </authorList>
    </citation>
    <scope>ELECTRON MICROSCOPY OF DASH COMPLEX</scope>
    <scope>FUNCTION</scope>
    <scope>IDENTIFICATION IN THE DASH COMPLEX</scope>
    <scope>SUBUNIT</scope>
</reference>